<comment type="function">
    <text evidence="1 6">Plays an important role in amino acid transport by acting as binding partner of amino acid transporters SLC6A18 and SLC6A19, regulating their trafficking on the cell surface and their activity (By similarity). May also play a role in trafficking of amino acid transporters SLC3A1 and SLC7A9 to the renal cortical cell membrane (By similarity). Regulator of SNARE complex function (PubMed:16330323). Stimulator of beta cell replication (By similarity).</text>
</comment>
<comment type="subunit">
    <text evidence="1 2 6">Monomer. Homodimer; dimerization prevents CLTRN cleavage by BACE2 (By similarity). Interacts with SLC6A18; this interaction regulates the trafficking of SLC6A18 to the cell membrane and its amino acid transporter activity. Interacts with SLC6A19; this interaction regulates the trafficking of SLC6A19 to the cell membrane and its amino acid transporter activity (By similarity). Interacts with SNAPIN (PubMed:16330323).</text>
</comment>
<comment type="subcellular location">
    <subcellularLocation>
        <location evidence="1">Cell membrane</location>
        <topology evidence="3">Single-pass type I membrane protein</topology>
    </subcellularLocation>
    <text evidence="1">Localizes to the brush border membranes of cells in the proximal tubules of kidney. Colocalized with SLC6A19 in the early proximal S1 tubule.</text>
</comment>
<comment type="tissue specificity">
    <text evidence="5 6">Kidney; collecting ducts. Pancreas; beta cells of islets.</text>
</comment>
<comment type="domain">
    <text evidence="2">The cleavage site containing the double Phe-Phe motif acts as negative regulator of shedding by BACE2.</text>
</comment>
<comment type="PTM">
    <text evidence="2">Glycosylated. Glycosylation is required for plasma membrane localization and for its cleavage by BACE2.</text>
</comment>
<comment type="PTM">
    <text evidence="1 2">Proteolytically processed in pancreatic beta cells by BACE2 leading to the generation and extracellular release of soluble CLTRN, and a corresponding cell-associated C-terminal fragment which is later cleaved by gamma-secretase. This shedding process inactivates CLTRN (By similarity). Three cleavage sites have been identified for BACE2, two clustered sites after Phe-116 and Leu-118 and a more membrane proximal site at Phe-125; the preferred BACE2 cleavage site seems to be between Phe-125 and Leu-126, Phe-116 and Leu-118 act as alternative sites (By similarity).</text>
</comment>
<comment type="similarity">
    <text evidence="7">Belongs to the CLTRN family.</text>
</comment>
<feature type="signal peptide" evidence="3">
    <location>
        <begin position="1"/>
        <end position="14"/>
    </location>
</feature>
<feature type="chain" id="PRO_0000245869" description="Collectrin">
    <location>
        <begin position="15"/>
        <end position="222"/>
    </location>
</feature>
<feature type="topological domain" description="Extracellular" evidence="2">
    <location>
        <begin position="15"/>
        <end position="141"/>
    </location>
</feature>
<feature type="transmembrane region" description="Helical" evidence="4">
    <location>
        <begin position="142"/>
        <end position="162"/>
    </location>
</feature>
<feature type="topological domain" description="Cytoplasmic" evidence="2">
    <location>
        <begin position="163"/>
        <end position="222"/>
    </location>
</feature>
<feature type="domain" description="Collectrin-like" evidence="4">
    <location>
        <begin position="21"/>
        <end position="222"/>
    </location>
</feature>
<feature type="site" description="Cleavage by BACE2" evidence="2">
    <location>
        <begin position="125"/>
        <end position="126"/>
    </location>
</feature>
<feature type="modified residue" description="Phosphothreonine" evidence="1">
    <location>
        <position position="214"/>
    </location>
</feature>
<feature type="modified residue" description="Phosphothreonine" evidence="1">
    <location>
        <position position="220"/>
    </location>
</feature>
<feature type="glycosylation site" description="N-linked (GlcNAc...) asparagine" evidence="3">
    <location>
        <position position="76"/>
    </location>
</feature>
<feature type="glycosylation site" description="N-linked (GlcNAc...) asparagine" evidence="3">
    <location>
        <position position="93"/>
    </location>
</feature>
<feature type="sequence conflict" description="In Ref. 1; AAG09307." evidence="7" ref="1">
    <original>L</original>
    <variation>F</variation>
    <location>
        <position position="96"/>
    </location>
</feature>
<feature type="sequence conflict" description="In Ref. 1; AAG09307." evidence="7" ref="1">
    <original>A</original>
    <variation>V</variation>
    <location>
        <position position="99"/>
    </location>
</feature>
<feature type="sequence conflict" description="In Ref. 1; AAG09307." evidence="7" ref="1">
    <original>N</original>
    <variation>K</variation>
    <location>
        <position position="110"/>
    </location>
</feature>
<feature type="sequence conflict" description="In Ref. 1; AAG09307." evidence="7" ref="1">
    <original>G</original>
    <variation>R</variation>
    <location>
        <position position="205"/>
    </location>
</feature>
<sequence length="222" mass="25051">MLWALFFLVTTIHAELCRPDAENAFKVRLSIKAALGDKAYVWDTDEEYLFRAMVAFSMRKVPNREGTEISHVLLCNVTQRVSFWFVVTDPLKNHTLPAAEVQSAIRMNRNRINSAFFLDDHTLEFLKIPSTLAPPMDPSVPVWIIVFGVIFCIVTVAIALLVLSGIRQRRRNKKGPPGVEDAEDKCENIITIENGIPCDPLDMKGGHINDGFLTEDERLTPL</sequence>
<organism>
    <name type="scientific">Rattus norvegicus</name>
    <name type="common">Rat</name>
    <dbReference type="NCBI Taxonomy" id="10116"/>
    <lineage>
        <taxon>Eukaryota</taxon>
        <taxon>Metazoa</taxon>
        <taxon>Chordata</taxon>
        <taxon>Craniata</taxon>
        <taxon>Vertebrata</taxon>
        <taxon>Euteleostomi</taxon>
        <taxon>Mammalia</taxon>
        <taxon>Eutheria</taxon>
        <taxon>Euarchontoglires</taxon>
        <taxon>Glires</taxon>
        <taxon>Rodentia</taxon>
        <taxon>Myomorpha</taxon>
        <taxon>Muroidea</taxon>
        <taxon>Muridae</taxon>
        <taxon>Murinae</taxon>
        <taxon>Rattus</taxon>
    </lineage>
</organism>
<keyword id="KW-1003">Cell membrane</keyword>
<keyword id="KW-0325">Glycoprotein</keyword>
<keyword id="KW-0472">Membrane</keyword>
<keyword id="KW-0597">Phosphoprotein</keyword>
<keyword id="KW-1185">Reference proteome</keyword>
<keyword id="KW-0732">Signal</keyword>
<keyword id="KW-0812">Transmembrane</keyword>
<keyword id="KW-1133">Transmembrane helix</keyword>
<protein>
    <recommendedName>
        <fullName>Collectrin</fullName>
    </recommendedName>
    <alternativeName>
        <fullName>Transmembrane protein 27</fullName>
    </alternativeName>
</protein>
<proteinExistence type="evidence at protein level"/>
<evidence type="ECO:0000250" key="1">
    <source>
        <dbReference type="UniProtKB" id="Q9ESG4"/>
    </source>
</evidence>
<evidence type="ECO:0000250" key="2">
    <source>
        <dbReference type="UniProtKB" id="Q9HBJ8"/>
    </source>
</evidence>
<evidence type="ECO:0000255" key="3"/>
<evidence type="ECO:0000255" key="4">
    <source>
        <dbReference type="PROSITE-ProRule" id="PRU01354"/>
    </source>
</evidence>
<evidence type="ECO:0000269" key="5">
    <source>
    </source>
</evidence>
<evidence type="ECO:0000269" key="6">
    <source>
    </source>
</evidence>
<evidence type="ECO:0000305" key="7"/>
<evidence type="ECO:0000312" key="8">
    <source>
        <dbReference type="RGD" id="708489"/>
    </source>
</evidence>
<name>CLTRN_RAT</name>
<reference key="1">
    <citation type="journal article" date="2001" name="J. Biol. Chem.">
        <title>Collectrin, a collecting duct-specific transmembrane glycoprotein, is a novel homolog of ACE2 and is developmentally regulated in embryonic kidneys.</title>
        <authorList>
            <person name="Zhang H."/>
            <person name="Wada J."/>
            <person name="Hida K."/>
            <person name="Tsuchiyama Y."/>
            <person name="Hiragushi K."/>
            <person name="Shikata K."/>
            <person name="Wang H."/>
            <person name="Lin S."/>
            <person name="Kanwar Y.S."/>
            <person name="Makino H."/>
        </authorList>
    </citation>
    <scope>NUCLEOTIDE SEQUENCE [MRNA]</scope>
    <scope>TISSUE SPECIFICITY</scope>
    <source>
        <strain>Sprague-Dawley</strain>
    </source>
</reference>
<reference key="2">
    <citation type="journal article" date="2004" name="Genome Res.">
        <title>The status, quality, and expansion of the NIH full-length cDNA project: the Mammalian Gene Collection (MGC).</title>
        <authorList>
            <consortium name="The MGC Project Team"/>
        </authorList>
    </citation>
    <scope>NUCLEOTIDE SEQUENCE [LARGE SCALE MRNA]</scope>
    <source>
        <tissue>Kidney</tissue>
    </source>
</reference>
<reference key="3">
    <citation type="journal article" date="2005" name="Cell Metab.">
        <title>The HNF-1 target collectrin controls insulin exocytosis by SNARE complex formation.</title>
        <authorList>
            <person name="Fukui K."/>
            <person name="Yang Q."/>
            <person name="Cao Y."/>
            <person name="Takahashi N."/>
            <person name="Hatakeyama H."/>
            <person name="Wang H."/>
            <person name="Wada J."/>
            <person name="Zhang Y."/>
            <person name="Marselli L."/>
            <person name="Nammo T."/>
            <person name="Yoneda K."/>
            <person name="Onishi M."/>
            <person name="Higashiyama S."/>
            <person name="Matsuzawa Y."/>
            <person name="Gonzalez F.J."/>
            <person name="Weir G.C."/>
            <person name="Kasai H."/>
            <person name="Shimomura I."/>
            <person name="Miyagawa J."/>
            <person name="Wollheim C.B."/>
            <person name="Yamagata K."/>
        </authorList>
    </citation>
    <scope>FUNCTION</scope>
    <scope>TISSUE SPECIFICITY</scope>
    <scope>INTERACTION WITH SNAPIN</scope>
</reference>
<accession>Q9ESG3</accession>
<accession>Q6AYY2</accession>
<gene>
    <name evidence="8" type="primary">Cltrn</name>
    <name type="synonym">Nx17</name>
    <name type="synonym">Tmem27</name>
</gene>
<dbReference type="EMBL" id="AF178086">
    <property type="protein sequence ID" value="AAG09307.1"/>
    <property type="molecule type" value="mRNA"/>
</dbReference>
<dbReference type="EMBL" id="BC078838">
    <property type="protein sequence ID" value="AAH78838.1"/>
    <property type="molecule type" value="mRNA"/>
</dbReference>
<dbReference type="RefSeq" id="NP_066125.2">
    <property type="nucleotide sequence ID" value="NM_020976.2"/>
</dbReference>
<dbReference type="SMR" id="Q9ESG3"/>
<dbReference type="FunCoup" id="Q9ESG3">
    <property type="interactions" value="42"/>
</dbReference>
<dbReference type="STRING" id="10116.ENSRNOP00000005348"/>
<dbReference type="GlyCosmos" id="Q9ESG3">
    <property type="glycosylation" value="2 sites, No reported glycans"/>
</dbReference>
<dbReference type="GlyGen" id="Q9ESG3">
    <property type="glycosylation" value="2 sites"/>
</dbReference>
<dbReference type="iPTMnet" id="Q9ESG3"/>
<dbReference type="PhosphoSitePlus" id="Q9ESG3"/>
<dbReference type="PaxDb" id="10116-ENSRNOP00000005348"/>
<dbReference type="GeneID" id="57395"/>
<dbReference type="KEGG" id="rno:57395"/>
<dbReference type="UCSC" id="RGD:708489">
    <property type="organism name" value="rat"/>
</dbReference>
<dbReference type="AGR" id="RGD:708489"/>
<dbReference type="CTD" id="57393"/>
<dbReference type="RGD" id="708489">
    <property type="gene designation" value="Cltrn"/>
</dbReference>
<dbReference type="VEuPathDB" id="HostDB:ENSRNOG00000003960"/>
<dbReference type="eggNOG" id="ENOG502RWVW">
    <property type="taxonomic scope" value="Eukaryota"/>
</dbReference>
<dbReference type="HOGENOM" id="CLU_108544_0_0_1"/>
<dbReference type="InParanoid" id="Q9ESG3"/>
<dbReference type="PhylomeDB" id="Q9ESG3"/>
<dbReference type="TreeFam" id="TF335519"/>
<dbReference type="PRO" id="PR:Q9ESG3"/>
<dbReference type="Proteomes" id="UP000002494">
    <property type="component" value="Chromosome X"/>
</dbReference>
<dbReference type="Bgee" id="ENSRNOG00000003960">
    <property type="expression patterns" value="Expressed in kidney and 16 other cell types or tissues"/>
</dbReference>
<dbReference type="GO" id="GO:0031526">
    <property type="term" value="C:brush border membrane"/>
    <property type="evidence" value="ECO:0000266"/>
    <property type="project" value="RGD"/>
</dbReference>
<dbReference type="GO" id="GO:0005737">
    <property type="term" value="C:cytoplasm"/>
    <property type="evidence" value="ECO:0000266"/>
    <property type="project" value="RGD"/>
</dbReference>
<dbReference type="GO" id="GO:0005886">
    <property type="term" value="C:plasma membrane"/>
    <property type="evidence" value="ECO:0000250"/>
    <property type="project" value="UniProtKB"/>
</dbReference>
<dbReference type="GO" id="GO:0042803">
    <property type="term" value="F:protein homodimerization activity"/>
    <property type="evidence" value="ECO:0000266"/>
    <property type="project" value="RGD"/>
</dbReference>
<dbReference type="GO" id="GO:0141109">
    <property type="term" value="F:transporter activator activity"/>
    <property type="evidence" value="ECO:0007669"/>
    <property type="project" value="Ensembl"/>
</dbReference>
<dbReference type="GO" id="GO:0017156">
    <property type="term" value="P:calcium-ion regulated exocytosis"/>
    <property type="evidence" value="ECO:0000266"/>
    <property type="project" value="RGD"/>
</dbReference>
<dbReference type="GO" id="GO:0035773">
    <property type="term" value="P:insulin secretion involved in cellular response to glucose stimulus"/>
    <property type="evidence" value="ECO:0000266"/>
    <property type="project" value="RGD"/>
</dbReference>
<dbReference type="GO" id="GO:0051957">
    <property type="term" value="P:positive regulation of amino acid transport"/>
    <property type="evidence" value="ECO:0000266"/>
    <property type="project" value="RGD"/>
</dbReference>
<dbReference type="GO" id="GO:1905737">
    <property type="term" value="P:positive regulation of L-proline import across plasma membrane"/>
    <property type="evidence" value="ECO:0000266"/>
    <property type="project" value="RGD"/>
</dbReference>
<dbReference type="GO" id="GO:0035493">
    <property type="term" value="P:SNARE complex assembly"/>
    <property type="evidence" value="ECO:0000266"/>
    <property type="project" value="RGD"/>
</dbReference>
<dbReference type="InterPro" id="IPR042944">
    <property type="entry name" value="Collectrin"/>
</dbReference>
<dbReference type="InterPro" id="IPR031588">
    <property type="entry name" value="Collectrin_dom"/>
</dbReference>
<dbReference type="PANTHER" id="PTHR46884">
    <property type="entry name" value="COLLECTRIN"/>
    <property type="match status" value="1"/>
</dbReference>
<dbReference type="PANTHER" id="PTHR46884:SF1">
    <property type="entry name" value="COLLECTRIN"/>
    <property type="match status" value="1"/>
</dbReference>
<dbReference type="Pfam" id="PF16959">
    <property type="entry name" value="Collectrin"/>
    <property type="match status" value="1"/>
</dbReference>
<dbReference type="PROSITE" id="PS52010">
    <property type="entry name" value="COLLECTRIN_LIKE"/>
    <property type="match status" value="1"/>
</dbReference>